<reference key="1">
    <citation type="journal article" date="2005" name="PLoS Biol.">
        <title>Major structural differences and novel potential virulence mechanisms from the genomes of multiple Campylobacter species.</title>
        <authorList>
            <person name="Fouts D.E."/>
            <person name="Mongodin E.F."/>
            <person name="Mandrell R.E."/>
            <person name="Miller W.G."/>
            <person name="Rasko D.A."/>
            <person name="Ravel J."/>
            <person name="Brinkac L.M."/>
            <person name="DeBoy R.T."/>
            <person name="Parker C.T."/>
            <person name="Daugherty S.C."/>
            <person name="Dodson R.J."/>
            <person name="Durkin A.S."/>
            <person name="Madupu R."/>
            <person name="Sullivan S.A."/>
            <person name="Shetty J.U."/>
            <person name="Ayodeji M.A."/>
            <person name="Shvartsbeyn A."/>
            <person name="Schatz M.C."/>
            <person name="Badger J.H."/>
            <person name="Fraser C.M."/>
            <person name="Nelson K.E."/>
        </authorList>
    </citation>
    <scope>NUCLEOTIDE SEQUENCE [LARGE SCALE GENOMIC DNA]</scope>
    <source>
        <strain>RM1221</strain>
    </source>
</reference>
<name>KAD_CAMJR</name>
<accession>Q5HVD2</accession>
<evidence type="ECO:0000255" key="1">
    <source>
        <dbReference type="HAMAP-Rule" id="MF_00235"/>
    </source>
</evidence>
<proteinExistence type="inferred from homology"/>
<comment type="function">
    <text evidence="1">Catalyzes the reversible transfer of the terminal phosphate group between ATP and AMP. Plays an important role in cellular energy homeostasis and in adenine nucleotide metabolism.</text>
</comment>
<comment type="catalytic activity">
    <reaction evidence="1">
        <text>AMP + ATP = 2 ADP</text>
        <dbReference type="Rhea" id="RHEA:12973"/>
        <dbReference type="ChEBI" id="CHEBI:30616"/>
        <dbReference type="ChEBI" id="CHEBI:456215"/>
        <dbReference type="ChEBI" id="CHEBI:456216"/>
        <dbReference type="EC" id="2.7.4.3"/>
    </reaction>
</comment>
<comment type="pathway">
    <text evidence="1">Purine metabolism; AMP biosynthesis via salvage pathway; AMP from ADP: step 1/1.</text>
</comment>
<comment type="subunit">
    <text evidence="1">Monomer.</text>
</comment>
<comment type="subcellular location">
    <subcellularLocation>
        <location evidence="1">Cytoplasm</location>
    </subcellularLocation>
</comment>
<comment type="domain">
    <text evidence="1">Consists of three domains, a large central CORE domain and two small peripheral domains, NMPbind and LID, which undergo movements during catalysis. The LID domain closes over the site of phosphoryl transfer upon ATP binding. Assembling and dissambling the active center during each catalytic cycle provides an effective means to prevent ATP hydrolysis.</text>
</comment>
<comment type="similarity">
    <text evidence="1">Belongs to the adenylate kinase family.</text>
</comment>
<sequence>MKELFLIIGAPGSGKTTDASLIAQADATNITHYSTGDLLRAEVASGSELGKTIDSFISKGNLVPLDVVINTIVCALKAAPTKTIIIDGYPRSVEQMMEFDKVLSEQNEICLKGVIEVRVSEEVAKERVLGRNRGTDDNEEVFYNRMKVYTEPLNEILDFYQKKKLHFIIDGERAIEPIVADMKELIKKIQSI</sequence>
<keyword id="KW-0067">ATP-binding</keyword>
<keyword id="KW-0963">Cytoplasm</keyword>
<keyword id="KW-0418">Kinase</keyword>
<keyword id="KW-0545">Nucleotide biosynthesis</keyword>
<keyword id="KW-0547">Nucleotide-binding</keyword>
<keyword id="KW-0808">Transferase</keyword>
<organism>
    <name type="scientific">Campylobacter jejuni (strain RM1221)</name>
    <dbReference type="NCBI Taxonomy" id="195099"/>
    <lineage>
        <taxon>Bacteria</taxon>
        <taxon>Pseudomonadati</taxon>
        <taxon>Campylobacterota</taxon>
        <taxon>Epsilonproteobacteria</taxon>
        <taxon>Campylobacterales</taxon>
        <taxon>Campylobacteraceae</taxon>
        <taxon>Campylobacter</taxon>
    </lineage>
</organism>
<gene>
    <name evidence="1" type="primary">adk</name>
    <name type="ordered locus">CJE0742</name>
</gene>
<dbReference type="EC" id="2.7.4.3" evidence="1"/>
<dbReference type="EMBL" id="CP000025">
    <property type="protein sequence ID" value="AAW34535.1"/>
    <property type="molecule type" value="Genomic_DNA"/>
</dbReference>
<dbReference type="RefSeq" id="WP_011049749.1">
    <property type="nucleotide sequence ID" value="NC_003912.7"/>
</dbReference>
<dbReference type="SMR" id="Q5HVD2"/>
<dbReference type="KEGG" id="cjr:CJE0742"/>
<dbReference type="HOGENOM" id="CLU_032354_4_1_7"/>
<dbReference type="UniPathway" id="UPA00588">
    <property type="reaction ID" value="UER00649"/>
</dbReference>
<dbReference type="GO" id="GO:0005737">
    <property type="term" value="C:cytoplasm"/>
    <property type="evidence" value="ECO:0007669"/>
    <property type="project" value="UniProtKB-SubCell"/>
</dbReference>
<dbReference type="GO" id="GO:0004017">
    <property type="term" value="F:adenylate kinase activity"/>
    <property type="evidence" value="ECO:0007669"/>
    <property type="project" value="UniProtKB-UniRule"/>
</dbReference>
<dbReference type="GO" id="GO:0005524">
    <property type="term" value="F:ATP binding"/>
    <property type="evidence" value="ECO:0007669"/>
    <property type="project" value="UniProtKB-UniRule"/>
</dbReference>
<dbReference type="GO" id="GO:0044209">
    <property type="term" value="P:AMP salvage"/>
    <property type="evidence" value="ECO:0007669"/>
    <property type="project" value="UniProtKB-UniRule"/>
</dbReference>
<dbReference type="CDD" id="cd01428">
    <property type="entry name" value="ADK"/>
    <property type="match status" value="1"/>
</dbReference>
<dbReference type="Gene3D" id="3.40.50.300">
    <property type="entry name" value="P-loop containing nucleotide triphosphate hydrolases"/>
    <property type="match status" value="1"/>
</dbReference>
<dbReference type="HAMAP" id="MF_00235">
    <property type="entry name" value="Adenylate_kinase_Adk"/>
    <property type="match status" value="1"/>
</dbReference>
<dbReference type="InterPro" id="IPR000850">
    <property type="entry name" value="Adenylat/UMP-CMP_kin"/>
</dbReference>
<dbReference type="InterPro" id="IPR033690">
    <property type="entry name" value="Adenylat_kinase_CS"/>
</dbReference>
<dbReference type="InterPro" id="IPR027417">
    <property type="entry name" value="P-loop_NTPase"/>
</dbReference>
<dbReference type="NCBIfam" id="NF001384">
    <property type="entry name" value="PRK00279.2-2"/>
    <property type="match status" value="1"/>
</dbReference>
<dbReference type="PANTHER" id="PTHR23359">
    <property type="entry name" value="NUCLEOTIDE KINASE"/>
    <property type="match status" value="1"/>
</dbReference>
<dbReference type="Pfam" id="PF00406">
    <property type="entry name" value="ADK"/>
    <property type="match status" value="1"/>
</dbReference>
<dbReference type="PRINTS" id="PR00094">
    <property type="entry name" value="ADENYLTKNASE"/>
</dbReference>
<dbReference type="SUPFAM" id="SSF52540">
    <property type="entry name" value="P-loop containing nucleoside triphosphate hydrolases"/>
    <property type="match status" value="1"/>
</dbReference>
<dbReference type="PROSITE" id="PS00113">
    <property type="entry name" value="ADENYLATE_KINASE"/>
    <property type="match status" value="1"/>
</dbReference>
<feature type="chain" id="PRO_1000058813" description="Adenylate kinase">
    <location>
        <begin position="1"/>
        <end position="192"/>
    </location>
</feature>
<feature type="region of interest" description="NMP" evidence="1">
    <location>
        <begin position="34"/>
        <end position="63"/>
    </location>
</feature>
<feature type="region of interest" description="LID" evidence="1">
    <location>
        <begin position="130"/>
        <end position="136"/>
    </location>
</feature>
<feature type="binding site" evidence="1">
    <location>
        <begin position="12"/>
        <end position="17"/>
    </location>
    <ligand>
        <name>ATP</name>
        <dbReference type="ChEBI" id="CHEBI:30616"/>
    </ligand>
</feature>
<feature type="binding site" evidence="1">
    <location>
        <position position="35"/>
    </location>
    <ligand>
        <name>AMP</name>
        <dbReference type="ChEBI" id="CHEBI:456215"/>
    </ligand>
</feature>
<feature type="binding site" evidence="1">
    <location>
        <position position="40"/>
    </location>
    <ligand>
        <name>AMP</name>
        <dbReference type="ChEBI" id="CHEBI:456215"/>
    </ligand>
</feature>
<feature type="binding site" evidence="1">
    <location>
        <begin position="61"/>
        <end position="63"/>
    </location>
    <ligand>
        <name>AMP</name>
        <dbReference type="ChEBI" id="CHEBI:456215"/>
    </ligand>
</feature>
<feature type="binding site" evidence="1">
    <location>
        <begin position="88"/>
        <end position="91"/>
    </location>
    <ligand>
        <name>AMP</name>
        <dbReference type="ChEBI" id="CHEBI:456215"/>
    </ligand>
</feature>
<feature type="binding site" evidence="1">
    <location>
        <position position="95"/>
    </location>
    <ligand>
        <name>AMP</name>
        <dbReference type="ChEBI" id="CHEBI:456215"/>
    </ligand>
</feature>
<feature type="binding site" evidence="1">
    <location>
        <position position="131"/>
    </location>
    <ligand>
        <name>ATP</name>
        <dbReference type="ChEBI" id="CHEBI:30616"/>
    </ligand>
</feature>
<feature type="binding site" evidence="1">
    <location>
        <position position="133"/>
    </location>
    <ligand>
        <name>AMP</name>
        <dbReference type="ChEBI" id="CHEBI:456215"/>
    </ligand>
</feature>
<feature type="binding site" evidence="1">
    <location>
        <position position="145"/>
    </location>
    <ligand>
        <name>AMP</name>
        <dbReference type="ChEBI" id="CHEBI:456215"/>
    </ligand>
</feature>
<feature type="binding site" evidence="1">
    <location>
        <position position="173"/>
    </location>
    <ligand>
        <name>ATP</name>
        <dbReference type="ChEBI" id="CHEBI:30616"/>
    </ligand>
</feature>
<protein>
    <recommendedName>
        <fullName evidence="1">Adenylate kinase</fullName>
        <shortName evidence="1">AK</shortName>
        <ecNumber evidence="1">2.7.4.3</ecNumber>
    </recommendedName>
    <alternativeName>
        <fullName evidence="1">ATP-AMP transphosphorylase</fullName>
    </alternativeName>
    <alternativeName>
        <fullName evidence="1">ATP:AMP phosphotransferase</fullName>
    </alternativeName>
    <alternativeName>
        <fullName evidence="1">Adenylate monophosphate kinase</fullName>
    </alternativeName>
</protein>